<accession>P47961</accession>
<evidence type="ECO:0000305" key="1"/>
<name>RS4_CRIGR</name>
<protein>
    <recommendedName>
        <fullName evidence="1">Small ribosomal subunit protein eS4</fullName>
    </recommendedName>
    <alternativeName>
        <fullName>40S ribosomal protein S4</fullName>
    </alternativeName>
</protein>
<comment type="similarity">
    <text evidence="1">Belongs to the eukaryotic ribosomal protein eS4 family.</text>
</comment>
<dbReference type="EMBL" id="D26473">
    <property type="protein sequence ID" value="BAA05485.1"/>
    <property type="molecule type" value="mRNA"/>
</dbReference>
<dbReference type="RefSeq" id="NP_001233602.1">
    <property type="nucleotide sequence ID" value="NM_001246673.1"/>
</dbReference>
<dbReference type="SMR" id="P47961"/>
<dbReference type="PaxDb" id="10029-NP_001233602.1"/>
<dbReference type="Ensembl" id="ENSCGRT00001022650.1">
    <property type="protein sequence ID" value="ENSCGRP00001018405.1"/>
    <property type="gene ID" value="ENSCGRG00001018159.1"/>
</dbReference>
<dbReference type="GeneID" id="100689408"/>
<dbReference type="KEGG" id="cge:100689408"/>
<dbReference type="CTD" id="6191"/>
<dbReference type="eggNOG" id="KOG0378">
    <property type="taxonomic scope" value="Eukaryota"/>
</dbReference>
<dbReference type="GeneTree" id="ENSGT00390000005569"/>
<dbReference type="OMA" id="GHIQLNL"/>
<dbReference type="OrthoDB" id="1109245at2759"/>
<dbReference type="Proteomes" id="UP000694386">
    <property type="component" value="Unplaced"/>
</dbReference>
<dbReference type="Proteomes" id="UP001108280">
    <property type="component" value="Chromosome X"/>
</dbReference>
<dbReference type="GO" id="GO:0022627">
    <property type="term" value="C:cytosolic small ribosomal subunit"/>
    <property type="evidence" value="ECO:0007669"/>
    <property type="project" value="TreeGrafter"/>
</dbReference>
<dbReference type="GO" id="GO:0019843">
    <property type="term" value="F:rRNA binding"/>
    <property type="evidence" value="ECO:0007669"/>
    <property type="project" value="UniProtKB-KW"/>
</dbReference>
<dbReference type="GO" id="GO:0003735">
    <property type="term" value="F:structural constituent of ribosome"/>
    <property type="evidence" value="ECO:0007669"/>
    <property type="project" value="InterPro"/>
</dbReference>
<dbReference type="GO" id="GO:0006412">
    <property type="term" value="P:translation"/>
    <property type="evidence" value="ECO:0007669"/>
    <property type="project" value="InterPro"/>
</dbReference>
<dbReference type="CDD" id="cd06087">
    <property type="entry name" value="KOW_RPS4"/>
    <property type="match status" value="1"/>
</dbReference>
<dbReference type="CDD" id="cd00165">
    <property type="entry name" value="S4"/>
    <property type="match status" value="1"/>
</dbReference>
<dbReference type="FunFam" id="2.30.30.30:FF:000005">
    <property type="entry name" value="40S ribosomal protein S4"/>
    <property type="match status" value="1"/>
</dbReference>
<dbReference type="FunFam" id="2.40.50.740:FF:000001">
    <property type="entry name" value="40S ribosomal protein S4"/>
    <property type="match status" value="1"/>
</dbReference>
<dbReference type="FunFam" id="3.10.290.10:FF:000051">
    <property type="entry name" value="40S ribosomal protein S4, X isoform"/>
    <property type="match status" value="1"/>
</dbReference>
<dbReference type="Gene3D" id="2.30.30.30">
    <property type="match status" value="1"/>
</dbReference>
<dbReference type="Gene3D" id="2.40.50.740">
    <property type="match status" value="1"/>
</dbReference>
<dbReference type="Gene3D" id="3.10.290.10">
    <property type="entry name" value="RNA-binding S4 domain"/>
    <property type="match status" value="1"/>
</dbReference>
<dbReference type="HAMAP" id="MF_00485">
    <property type="entry name" value="Ribosomal_eS4"/>
    <property type="match status" value="1"/>
</dbReference>
<dbReference type="InterPro" id="IPR005824">
    <property type="entry name" value="KOW"/>
</dbReference>
<dbReference type="InterPro" id="IPR014722">
    <property type="entry name" value="Rib_uL2_dom2"/>
</dbReference>
<dbReference type="InterPro" id="IPR000876">
    <property type="entry name" value="Ribosomal_eS4"/>
</dbReference>
<dbReference type="InterPro" id="IPR032277">
    <property type="entry name" value="Ribosomal_eS4_C"/>
</dbReference>
<dbReference type="InterPro" id="IPR013845">
    <property type="entry name" value="Ribosomal_eS4_central_region"/>
</dbReference>
<dbReference type="InterPro" id="IPR038237">
    <property type="entry name" value="Ribosomal_eS4_central_sf"/>
</dbReference>
<dbReference type="InterPro" id="IPR041982">
    <property type="entry name" value="Ribosomal_eS4_KOW"/>
</dbReference>
<dbReference type="InterPro" id="IPR013843">
    <property type="entry name" value="Ribosomal_eS4_N"/>
</dbReference>
<dbReference type="InterPro" id="IPR018199">
    <property type="entry name" value="Ribosomal_eS4_N_CS"/>
</dbReference>
<dbReference type="InterPro" id="IPR002942">
    <property type="entry name" value="S4_RNA-bd"/>
</dbReference>
<dbReference type="InterPro" id="IPR036986">
    <property type="entry name" value="S4_RNA-bd_sf"/>
</dbReference>
<dbReference type="PANTHER" id="PTHR11581">
    <property type="entry name" value="30S/40S RIBOSOMAL PROTEIN S4"/>
    <property type="match status" value="1"/>
</dbReference>
<dbReference type="PANTHER" id="PTHR11581:SF0">
    <property type="entry name" value="SMALL RIBOSOMAL SUBUNIT PROTEIN ES4"/>
    <property type="match status" value="1"/>
</dbReference>
<dbReference type="Pfam" id="PF16121">
    <property type="entry name" value="40S_S4_C"/>
    <property type="match status" value="1"/>
</dbReference>
<dbReference type="Pfam" id="PF00467">
    <property type="entry name" value="KOW"/>
    <property type="match status" value="1"/>
</dbReference>
<dbReference type="Pfam" id="PF00900">
    <property type="entry name" value="Ribosomal_S4e"/>
    <property type="match status" value="1"/>
</dbReference>
<dbReference type="Pfam" id="PF08071">
    <property type="entry name" value="RS4NT"/>
    <property type="match status" value="1"/>
</dbReference>
<dbReference type="PIRSF" id="PIRSF002116">
    <property type="entry name" value="Ribosomal_S4"/>
    <property type="match status" value="1"/>
</dbReference>
<dbReference type="SMART" id="SM00363">
    <property type="entry name" value="S4"/>
    <property type="match status" value="1"/>
</dbReference>
<dbReference type="PROSITE" id="PS00528">
    <property type="entry name" value="RIBOSOMAL_S4E"/>
    <property type="match status" value="1"/>
</dbReference>
<dbReference type="PROSITE" id="PS50889">
    <property type="entry name" value="S4"/>
    <property type="match status" value="1"/>
</dbReference>
<gene>
    <name type="primary">RPS4</name>
</gene>
<keyword id="KW-0687">Ribonucleoprotein</keyword>
<keyword id="KW-0689">Ribosomal protein</keyword>
<keyword id="KW-0694">RNA-binding</keyword>
<keyword id="KW-0699">rRNA-binding</keyword>
<feature type="chain" id="PRO_0000130821" description="Small ribosomal subunit protein eS4">
    <location>
        <begin position="1"/>
        <end position="263"/>
    </location>
</feature>
<feature type="domain" description="S4 RNA-binding">
    <location>
        <begin position="42"/>
        <end position="104"/>
    </location>
</feature>
<proteinExistence type="evidence at transcript level"/>
<sequence length="263" mass="29588">MARGPKKHLKRVAAPKHWMLDKLTGVFAPRPSTGPHKLRECLPLIIFLRNRLKYALTGDEVKKICMQRFIKIDGKVRTDITYPAGFMDVISIDKTGENFRLIYDTKGRFAVHRITSEEAKYKLCKVRKIFVGTKGIPHLVTHDARTIRYPDPLIKVNDTIQIDLETGKITDFIKFDTGNLCMVTGGANLGRIGVITNRERHPGSFDVVHVKDANGNSFATRLSNIFVIGKGNKPWISLPRGKGIRLTIAEERDKRLAAKQSSG</sequence>
<reference key="1">
    <citation type="submission" date="1994-01" db="EMBL/GenBank/DDBJ databases">
        <authorList>
            <person name="Ebihara M."/>
            <person name="Onodera K."/>
        </authorList>
    </citation>
    <scope>NUCLEOTIDE SEQUENCE [MRNA]</scope>
    <source>
        <tissue>Ovary</tissue>
    </source>
</reference>
<organism>
    <name type="scientific">Cricetulus griseus</name>
    <name type="common">Chinese hamster</name>
    <name type="synonym">Cricetulus barabensis griseus</name>
    <dbReference type="NCBI Taxonomy" id="10029"/>
    <lineage>
        <taxon>Eukaryota</taxon>
        <taxon>Metazoa</taxon>
        <taxon>Chordata</taxon>
        <taxon>Craniata</taxon>
        <taxon>Vertebrata</taxon>
        <taxon>Euteleostomi</taxon>
        <taxon>Mammalia</taxon>
        <taxon>Eutheria</taxon>
        <taxon>Euarchontoglires</taxon>
        <taxon>Glires</taxon>
        <taxon>Rodentia</taxon>
        <taxon>Myomorpha</taxon>
        <taxon>Muroidea</taxon>
        <taxon>Cricetidae</taxon>
        <taxon>Cricetinae</taxon>
        <taxon>Cricetulus</taxon>
    </lineage>
</organism>